<dbReference type="EC" id="3.4.22.-" evidence="2 3 5"/>
<dbReference type="EMBL" id="CP001956">
    <property type="protein sequence ID" value="ADE02650.1"/>
    <property type="molecule type" value="Genomic_DNA"/>
</dbReference>
<dbReference type="EMBL" id="AOHU01000096">
    <property type="protein sequence ID" value="ELY26918.1"/>
    <property type="molecule type" value="Genomic_DNA"/>
</dbReference>
<dbReference type="RefSeq" id="WP_004044024.1">
    <property type="nucleotide sequence ID" value="NC_013967.1"/>
</dbReference>
<dbReference type="STRING" id="309800.HVO_0915"/>
<dbReference type="TCDB" id="9.B.297.1.1">
    <property type="family name" value="the archaeosortase/exosortase/rhomosortase (sortase) family"/>
</dbReference>
<dbReference type="PaxDb" id="309800-C498_14173"/>
<dbReference type="EnsemblBacteria" id="ADE02650">
    <property type="protein sequence ID" value="ADE02650"/>
    <property type="gene ID" value="HVO_0915"/>
</dbReference>
<dbReference type="GeneID" id="8926366"/>
<dbReference type="KEGG" id="hvo:HVO_0915"/>
<dbReference type="PATRIC" id="fig|309800.29.peg.2725"/>
<dbReference type="eggNOG" id="arCOG04471">
    <property type="taxonomic scope" value="Archaea"/>
</dbReference>
<dbReference type="HOGENOM" id="CLU_065734_1_0_2"/>
<dbReference type="OrthoDB" id="200496at2157"/>
<dbReference type="Proteomes" id="UP000008243">
    <property type="component" value="Chromosome"/>
</dbReference>
<dbReference type="Proteomes" id="UP000011532">
    <property type="component" value="Unassembled WGS sequence"/>
</dbReference>
<dbReference type="GO" id="GO:0005886">
    <property type="term" value="C:plasma membrane"/>
    <property type="evidence" value="ECO:0007669"/>
    <property type="project" value="UniProtKB-SubCell"/>
</dbReference>
<dbReference type="GO" id="GO:0008233">
    <property type="term" value="F:peptidase activity"/>
    <property type="evidence" value="ECO:0007669"/>
    <property type="project" value="UniProtKB-KW"/>
</dbReference>
<dbReference type="GO" id="GO:0006508">
    <property type="term" value="P:proteolysis"/>
    <property type="evidence" value="ECO:0007669"/>
    <property type="project" value="UniProtKB-KW"/>
</dbReference>
<dbReference type="InterPro" id="IPR014522">
    <property type="entry name" value="ArtA"/>
</dbReference>
<dbReference type="InterPro" id="IPR026392">
    <property type="entry name" value="Exo/Archaeosortase_dom"/>
</dbReference>
<dbReference type="NCBIfam" id="TIGR04178">
    <property type="entry name" value="exo_archaeo"/>
    <property type="match status" value="1"/>
</dbReference>
<dbReference type="NCBIfam" id="TIGR04125">
    <property type="entry name" value="exosort_PGF_TRM"/>
    <property type="match status" value="1"/>
</dbReference>
<dbReference type="PIRSF" id="PIRSF025737">
    <property type="entry name" value="Cyco1"/>
    <property type="match status" value="1"/>
</dbReference>
<organism>
    <name type="scientific">Haloferax volcanii (strain ATCC 29605 / DSM 3757 / JCM 8879 / NBRC 14742 / NCIMB 2012 / VKM B-1768 / DS2)</name>
    <name type="common">Halobacterium volcanii</name>
    <dbReference type="NCBI Taxonomy" id="309800"/>
    <lineage>
        <taxon>Archaea</taxon>
        <taxon>Methanobacteriati</taxon>
        <taxon>Methanobacteriota</taxon>
        <taxon>Stenosarchaea group</taxon>
        <taxon>Halobacteria</taxon>
        <taxon>Halobacteriales</taxon>
        <taxon>Haloferacaceae</taxon>
        <taxon>Haloferax</taxon>
    </lineage>
</organism>
<feature type="chain" id="PRO_0000428764" description="Archaeosortase A">
    <location>
        <begin position="1"/>
        <end position="303"/>
    </location>
</feature>
<feature type="transmembrane region" description="Helical" evidence="1">
    <location>
        <begin position="3"/>
        <end position="23"/>
    </location>
</feature>
<feature type="transmembrane region" description="Helical" evidence="1">
    <location>
        <begin position="36"/>
        <end position="56"/>
    </location>
</feature>
<feature type="transmembrane region" description="Helical" evidence="1">
    <location>
        <begin position="60"/>
        <end position="80"/>
    </location>
</feature>
<feature type="transmembrane region" description="Helical" evidence="1">
    <location>
        <begin position="93"/>
        <end position="113"/>
    </location>
</feature>
<feature type="transmembrane region" description="Helical" evidence="1">
    <location>
        <begin position="169"/>
        <end position="189"/>
    </location>
</feature>
<feature type="transmembrane region" description="Helical" evidence="1">
    <location>
        <begin position="200"/>
        <end position="220"/>
    </location>
</feature>
<feature type="transmembrane region" description="Helical" evidence="1">
    <location>
        <begin position="259"/>
        <end position="279"/>
    </location>
</feature>
<feature type="active site" description="Acyl-thioester intermediate" evidence="11">
    <location>
        <position position="173"/>
    </location>
</feature>
<feature type="active site" description="Proton donor" evidence="11">
    <location>
        <position position="214"/>
    </location>
</feature>
<feature type="site" description="Transition state stabilizer" evidence="11">
    <location>
        <position position="253"/>
    </location>
</feature>
<feature type="mutagenesis site" description="Lack of processing activity." evidence="5">
    <original>C</original>
    <variation>A</variation>
    <variation>S</variation>
    <location>
        <position position="173"/>
    </location>
</feature>
<feature type="mutagenesis site" description="Lack of processing activity." evidence="5">
    <original>R</original>
    <variation>A</variation>
    <location>
        <position position="214"/>
    </location>
</feature>
<feature type="mutagenesis site" description="Retains some processing activity but does not complement deletion mutant." evidence="5">
    <original>R</original>
    <variation>A</variation>
    <location>
        <position position="253"/>
    </location>
</feature>
<name>ARTA_HALVD</name>
<gene>
    <name evidence="6" type="primary">artA</name>
    <name type="synonym">cyo</name>
    <name type="ordered locus">HVO_0915</name>
    <name type="ORF">C498_14173</name>
</gene>
<accession>D4GUZ4</accession>
<reference key="1">
    <citation type="journal article" date="2010" name="PLoS ONE">
        <title>The complete genome sequence of Haloferax volcanii DS2, a model archaeon.</title>
        <authorList>
            <person name="Hartman A.L."/>
            <person name="Norais C."/>
            <person name="Badger J.H."/>
            <person name="Delmas S."/>
            <person name="Haldenby S."/>
            <person name="Madupu R."/>
            <person name="Robinson J."/>
            <person name="Khouri H."/>
            <person name="Ren Q."/>
            <person name="Lowe T.M."/>
            <person name="Maupin-Furlow J."/>
            <person name="Pohlschroder M."/>
            <person name="Daniels C."/>
            <person name="Pfeiffer F."/>
            <person name="Allers T."/>
            <person name="Eisen J.A."/>
        </authorList>
    </citation>
    <scope>NUCLEOTIDE SEQUENCE [LARGE SCALE GENOMIC DNA]</scope>
    <source>
        <strain>ATCC 29605 / DSM 3757 / JCM 8879 / NBRC 14742 / NCIMB 2012 / VKM B-1768 / DS2</strain>
    </source>
</reference>
<reference key="2">
    <citation type="journal article" date="2014" name="PLoS Genet.">
        <title>Phylogenetically driven sequencing of extremely halophilic archaea reveals strategies for static and dynamic osmo-response.</title>
        <authorList>
            <person name="Becker E.A."/>
            <person name="Seitzer P.M."/>
            <person name="Tritt A."/>
            <person name="Larsen D."/>
            <person name="Krusor M."/>
            <person name="Yao A.I."/>
            <person name="Wu D."/>
            <person name="Madern D."/>
            <person name="Eisen J.A."/>
            <person name="Darling A.E."/>
            <person name="Facciotti M.T."/>
        </authorList>
    </citation>
    <scope>NUCLEOTIDE SEQUENCE [LARGE SCALE GENOMIC DNA]</scope>
    <source>
        <strain>ATCC 29605 / DSM 3757 / JCM 8879 / NBRC 14742 / NCIMB 2012 / VKM B-1768 / DS2</strain>
    </source>
</reference>
<reference key="3">
    <citation type="journal article" date="2012" name="J. Bacteriol.">
        <title>Archaeosortases and exosortases are widely distributed systems linking membrane transit with posttranslational modification.</title>
        <authorList>
            <person name="Haft D.H."/>
            <person name="Payne S.H."/>
            <person name="Selengut J.D."/>
        </authorList>
    </citation>
    <scope>NOMENCLATURE</scope>
    <scope>GENE FAMILY</scope>
</reference>
<reference key="4">
    <citation type="journal article" date="2013" name="Mol. Microbiol.">
        <title>Haloferax volcanii archaeosortase is required for motility, mating, and C-terminal processing of the S-layer glycoprotein.</title>
        <authorList>
            <person name="Abdul Halim M.F."/>
            <person name="Pfeiffer F."/>
            <person name="Zou J."/>
            <person name="Frisch A."/>
            <person name="Haft D."/>
            <person name="Wu S."/>
            <person name="Tolic N."/>
            <person name="Brewer H."/>
            <person name="Payne S.H."/>
            <person name="Pasa-Tolic L."/>
            <person name="Pohlschroder M."/>
        </authorList>
    </citation>
    <scope>FUNCTION</scope>
    <scope>CATALYTIC ACTIVITY</scope>
    <scope>DISRUPTION PHENOTYPE</scope>
    <source>
        <strain>DS2 / DS70</strain>
    </source>
</reference>
<reference key="5">
    <citation type="journal article" date="2015" name="J. Bacteriol.">
        <title>Permuting the PGF signature motif blocks both archaeosortase-dependent C-terminal cleavage and prenyl lipid attachment for the Haloferax volcanii S-layer glycoprotein.</title>
        <authorList>
            <person name="Abdul Halim M.F."/>
            <person name="Karch K.R."/>
            <person name="Zhou Y."/>
            <person name="Haft D.H."/>
            <person name="Garcia B.A."/>
            <person name="Pohlschroder M."/>
        </authorList>
    </citation>
    <scope>FUNCTION</scope>
    <scope>CATALYTIC ACTIVITY</scope>
</reference>
<reference key="6">
    <citation type="journal article" date="2017" name="J. Bacteriol.">
        <title>ArtA-dependent processing of a Tat substrate containing a conserved tripartite structure that is not localized at the C terminus.</title>
        <authorList>
            <person name="Abdul Halim M.F."/>
            <person name="Stoltzfus J.D."/>
            <person name="Schulze S."/>
            <person name="Hippler M."/>
            <person name="Pohlschroder M."/>
        </authorList>
    </citation>
    <scope>FUNCTION</scope>
    <source>
        <strain>H53</strain>
    </source>
</reference>
<reference key="7">
    <citation type="journal article" date="2018" name="Mol. Microbiol.">
        <title>Conserved residues are critical for Haloferax volcanii archaeosortase catalytic activity: implications for convergent evolution of the catalytic mechanisms of non-homologous sortases from archaea and bacteria.</title>
        <authorList>
            <person name="Abdul Halim M.F."/>
            <person name="Rodriguez R."/>
            <person name="Stoltzfus J.D."/>
            <person name="Duggin I.G."/>
            <person name="Pohlschroder M."/>
        </authorList>
    </citation>
    <scope>CATALYTIC ACTIVITY</scope>
    <scope>ACTIVE SITE</scope>
    <scope>MUTAGENESIS OF CYS-173; ARG-214 AND ARG-253</scope>
</reference>
<keyword id="KW-1003">Cell membrane</keyword>
<keyword id="KW-0378">Hydrolase</keyword>
<keyword id="KW-0472">Membrane</keyword>
<keyword id="KW-0645">Protease</keyword>
<keyword id="KW-1185">Reference proteome</keyword>
<keyword id="KW-0812">Transmembrane</keyword>
<keyword id="KW-1133">Transmembrane helix</keyword>
<proteinExistence type="evidence at protein level"/>
<comment type="function">
    <text evidence="2 3 4 9 10">Transpeptidase that recognizes and modifies its substrate by proteolytic cleavage of a sorting signal. Following cleavage, a covalent intermediate is formed via a thioester bond between the archaeosortase and its substrate, which is then transferred and covalently attached to the cell membrane (Probable). This sortase recognizes a tripartite structure consisting of a conserved Pro-Gly-Phe (PGF) motif, followed by a transmembrane alpha helix domain and a cluster of basic residues, usually at the C-terminus of target proteins (Probable). Confirmed substrates include the cell surface S-layer glycoprotein Csg and HVO_0405 (PubMed:23651326, PubMed:26712937, PubMed:28069824). ArtA is required for the C-terminal processing of Csg and for its lipidation and attachment to the archaeal plasma membrane (PubMed:23651326, PubMed:26712937). It is also required for the processing of HVO_0405, which contains an atypical central tripartite structure (PubMed:28069824).</text>
</comment>
<comment type="subcellular location">
    <subcellularLocation>
        <location evidence="7">Cell membrane</location>
        <topology evidence="1">Multi-pass membrane protein</topology>
    </subcellularLocation>
</comment>
<comment type="disruption phenotype">
    <text evidence="2">Deletion of the gene results in poor growth, especially under low-salt conditions, alterations in cell shape and in the S-layer, impaired motility and impaired conjugation.</text>
</comment>
<comment type="similarity">
    <text evidence="8">Belongs to the exosortase/archaeosortase family. Archaeosortase A subfamily.</text>
</comment>
<protein>
    <recommendedName>
        <fullName evidence="6">Archaeosortase A</fullName>
        <ecNumber evidence="2 3 5">3.4.22.-</ecNumber>
    </recommendedName>
</protein>
<sequence>MPGLLSDILAWVVIGTFVAGAVANGRDRELGRRVMTAAWVLFALFWLQLIPHFTLVHKSYIEGLLTIAAVPASLYAGWLLYNGRDTLFVLSRAVAAMGVVYLPFETIPAFTLLGATVPAPRGVLMETVAAQTRFLIESLGYTPQMIVGDQGYLNTFLWMQGSHRLEISVVLACTGLGSIAIFAGLIAAVDAPMGRKLRGLAIAVPIIYALNLLRTTFIAISVGKQYFHLFVDEVLFLFGSSDPYMVSFFISDRIISQALAVVALVGVTYLVVHEVPELLTVIEDVLYMVTGDEYDLRNELGLD</sequence>
<evidence type="ECO:0000255" key="1"/>
<evidence type="ECO:0000269" key="2">
    <source>
    </source>
</evidence>
<evidence type="ECO:0000269" key="3">
    <source>
    </source>
</evidence>
<evidence type="ECO:0000269" key="4">
    <source>
    </source>
</evidence>
<evidence type="ECO:0000269" key="5">
    <source>
    </source>
</evidence>
<evidence type="ECO:0000303" key="6">
    <source>
    </source>
</evidence>
<evidence type="ECO:0000305" key="7"/>
<evidence type="ECO:0000305" key="8">
    <source>
    </source>
</evidence>
<evidence type="ECO:0000305" key="9">
    <source>
    </source>
</evidence>
<evidence type="ECO:0000305" key="10">
    <source>
    </source>
</evidence>
<evidence type="ECO:0000305" key="11">
    <source>
    </source>
</evidence>